<feature type="chain" id="PRO_0000190927" description="Tetraacyldisaccharide 4'-kinase">
    <location>
        <begin position="1"/>
        <end position="353"/>
    </location>
</feature>
<feature type="binding site" evidence="1">
    <location>
        <begin position="66"/>
        <end position="73"/>
    </location>
    <ligand>
        <name>ATP</name>
        <dbReference type="ChEBI" id="CHEBI:30616"/>
    </ligand>
</feature>
<comment type="function">
    <text evidence="1">Transfers the gamma-phosphate of ATP to the 4'-position of a tetraacyldisaccharide 1-phosphate intermediate (termed DS-1-P) to form tetraacyldisaccharide 1,4'-bis-phosphate (lipid IVA).</text>
</comment>
<comment type="catalytic activity">
    <reaction evidence="1">
        <text>a lipid A disaccharide + ATP = a lipid IVA + ADP + H(+)</text>
        <dbReference type="Rhea" id="RHEA:67840"/>
        <dbReference type="ChEBI" id="CHEBI:15378"/>
        <dbReference type="ChEBI" id="CHEBI:30616"/>
        <dbReference type="ChEBI" id="CHEBI:176343"/>
        <dbReference type="ChEBI" id="CHEBI:176425"/>
        <dbReference type="ChEBI" id="CHEBI:456216"/>
        <dbReference type="EC" id="2.7.1.130"/>
    </reaction>
</comment>
<comment type="pathway">
    <text evidence="1">Glycolipid biosynthesis; lipid IV(A) biosynthesis; lipid IV(A) from (3R)-3-hydroxytetradecanoyl-[acyl-carrier-protein] and UDP-N-acetyl-alpha-D-glucosamine: step 6/6.</text>
</comment>
<comment type="similarity">
    <text evidence="1">Belongs to the LpxK family.</text>
</comment>
<accession>Q74AU2</accession>
<organism>
    <name type="scientific">Geobacter sulfurreducens (strain ATCC 51573 / DSM 12127 / PCA)</name>
    <dbReference type="NCBI Taxonomy" id="243231"/>
    <lineage>
        <taxon>Bacteria</taxon>
        <taxon>Pseudomonadati</taxon>
        <taxon>Thermodesulfobacteriota</taxon>
        <taxon>Desulfuromonadia</taxon>
        <taxon>Geobacterales</taxon>
        <taxon>Geobacteraceae</taxon>
        <taxon>Geobacter</taxon>
    </lineage>
</organism>
<sequence length="353" mass="37248">MSCTGFWRKLASGEECGAAARLLGAVLAIPAALYGLVVRLRALAYARGLSTVRHLDRPVISVGNLTVGGTGKTPMVAYLARRLMARGKRVAVISRGYGGSLEGETRIVSDGRTIVLSAAEAGDEPVHLATSVPGLMTVIGTDRYTAGLLALEQLDPDVFILDDGYQHLRLHRDLNILLMDCNRPLGNGRTLPAGLLREPQTAVRRADLVVYTRCTGGKAPAVHGMIPSCRAGHALTGAALLPDGEVQPLAALRGLRGVACAGIAEPEGFFDALRREGLDIVAAIPFADHASYGEREVSTLREAAAGADYLITTGKDGVKLSAHLARLLPVYATVLEMRPLDPAPLEAALDKVL</sequence>
<gene>
    <name evidence="1" type="primary">lpxK</name>
    <name type="ordered locus">GSU2258</name>
</gene>
<evidence type="ECO:0000255" key="1">
    <source>
        <dbReference type="HAMAP-Rule" id="MF_00409"/>
    </source>
</evidence>
<dbReference type="EC" id="2.7.1.130" evidence="1"/>
<dbReference type="EMBL" id="AE017180">
    <property type="protein sequence ID" value="AAR35634.1"/>
    <property type="molecule type" value="Genomic_DNA"/>
</dbReference>
<dbReference type="RefSeq" id="NP_953307.1">
    <property type="nucleotide sequence ID" value="NC_002939.5"/>
</dbReference>
<dbReference type="RefSeq" id="WP_010942898.1">
    <property type="nucleotide sequence ID" value="NC_002939.5"/>
</dbReference>
<dbReference type="SMR" id="Q74AU2"/>
<dbReference type="FunCoup" id="Q74AU2">
    <property type="interactions" value="251"/>
</dbReference>
<dbReference type="STRING" id="243231.GSU2258"/>
<dbReference type="EnsemblBacteria" id="AAR35634">
    <property type="protein sequence ID" value="AAR35634"/>
    <property type="gene ID" value="GSU2258"/>
</dbReference>
<dbReference type="KEGG" id="gsu:GSU2258"/>
<dbReference type="PATRIC" id="fig|243231.5.peg.2289"/>
<dbReference type="eggNOG" id="COG1663">
    <property type="taxonomic scope" value="Bacteria"/>
</dbReference>
<dbReference type="HOGENOM" id="CLU_038816_6_0_7"/>
<dbReference type="InParanoid" id="Q74AU2"/>
<dbReference type="OrthoDB" id="9766423at2"/>
<dbReference type="UniPathway" id="UPA00359">
    <property type="reaction ID" value="UER00482"/>
</dbReference>
<dbReference type="Proteomes" id="UP000000577">
    <property type="component" value="Chromosome"/>
</dbReference>
<dbReference type="GO" id="GO:0005886">
    <property type="term" value="C:plasma membrane"/>
    <property type="evidence" value="ECO:0000318"/>
    <property type="project" value="GO_Central"/>
</dbReference>
<dbReference type="GO" id="GO:0005524">
    <property type="term" value="F:ATP binding"/>
    <property type="evidence" value="ECO:0007669"/>
    <property type="project" value="UniProtKB-UniRule"/>
</dbReference>
<dbReference type="GO" id="GO:0009029">
    <property type="term" value="F:tetraacyldisaccharide 4'-kinase activity"/>
    <property type="evidence" value="ECO:0000318"/>
    <property type="project" value="GO_Central"/>
</dbReference>
<dbReference type="GO" id="GO:0009245">
    <property type="term" value="P:lipid A biosynthetic process"/>
    <property type="evidence" value="ECO:0000318"/>
    <property type="project" value="GO_Central"/>
</dbReference>
<dbReference type="GO" id="GO:0009244">
    <property type="term" value="P:lipopolysaccharide core region biosynthetic process"/>
    <property type="evidence" value="ECO:0000318"/>
    <property type="project" value="GO_Central"/>
</dbReference>
<dbReference type="CDD" id="cd01983">
    <property type="entry name" value="SIMIBI"/>
    <property type="match status" value="1"/>
</dbReference>
<dbReference type="HAMAP" id="MF_00409">
    <property type="entry name" value="LpxK"/>
    <property type="match status" value="1"/>
</dbReference>
<dbReference type="InterPro" id="IPR003758">
    <property type="entry name" value="LpxK"/>
</dbReference>
<dbReference type="InterPro" id="IPR027417">
    <property type="entry name" value="P-loop_NTPase"/>
</dbReference>
<dbReference type="NCBIfam" id="TIGR00682">
    <property type="entry name" value="lpxK"/>
    <property type="match status" value="1"/>
</dbReference>
<dbReference type="PANTHER" id="PTHR42724">
    <property type="entry name" value="TETRAACYLDISACCHARIDE 4'-KINASE"/>
    <property type="match status" value="1"/>
</dbReference>
<dbReference type="PANTHER" id="PTHR42724:SF1">
    <property type="entry name" value="TETRAACYLDISACCHARIDE 4'-KINASE, MITOCHONDRIAL-RELATED"/>
    <property type="match status" value="1"/>
</dbReference>
<dbReference type="Pfam" id="PF02606">
    <property type="entry name" value="LpxK"/>
    <property type="match status" value="1"/>
</dbReference>
<dbReference type="SUPFAM" id="SSF52540">
    <property type="entry name" value="P-loop containing nucleoside triphosphate hydrolases"/>
    <property type="match status" value="1"/>
</dbReference>
<protein>
    <recommendedName>
        <fullName evidence="1">Tetraacyldisaccharide 4'-kinase</fullName>
        <ecNumber evidence="1">2.7.1.130</ecNumber>
    </recommendedName>
    <alternativeName>
        <fullName evidence="1">Lipid A 4'-kinase</fullName>
    </alternativeName>
</protein>
<name>LPXK_GEOSL</name>
<proteinExistence type="inferred from homology"/>
<keyword id="KW-0067">ATP-binding</keyword>
<keyword id="KW-0418">Kinase</keyword>
<keyword id="KW-0441">Lipid A biosynthesis</keyword>
<keyword id="KW-0444">Lipid biosynthesis</keyword>
<keyword id="KW-0443">Lipid metabolism</keyword>
<keyword id="KW-0547">Nucleotide-binding</keyword>
<keyword id="KW-1185">Reference proteome</keyword>
<keyword id="KW-0808">Transferase</keyword>
<reference key="1">
    <citation type="journal article" date="2003" name="Science">
        <title>Genome of Geobacter sulfurreducens: metal reduction in subsurface environments.</title>
        <authorList>
            <person name="Methe B.A."/>
            <person name="Nelson K.E."/>
            <person name="Eisen J.A."/>
            <person name="Paulsen I.T."/>
            <person name="Nelson W.C."/>
            <person name="Heidelberg J.F."/>
            <person name="Wu D."/>
            <person name="Wu M."/>
            <person name="Ward N.L."/>
            <person name="Beanan M.J."/>
            <person name="Dodson R.J."/>
            <person name="Madupu R."/>
            <person name="Brinkac L.M."/>
            <person name="Daugherty S.C."/>
            <person name="DeBoy R.T."/>
            <person name="Durkin A.S."/>
            <person name="Gwinn M.L."/>
            <person name="Kolonay J.F."/>
            <person name="Sullivan S.A."/>
            <person name="Haft D.H."/>
            <person name="Selengut J."/>
            <person name="Davidsen T.M."/>
            <person name="Zafar N."/>
            <person name="White O."/>
            <person name="Tran B."/>
            <person name="Romero C."/>
            <person name="Forberger H.A."/>
            <person name="Weidman J.F."/>
            <person name="Khouri H.M."/>
            <person name="Feldblyum T.V."/>
            <person name="Utterback T.R."/>
            <person name="Van Aken S.E."/>
            <person name="Lovley D.R."/>
            <person name="Fraser C.M."/>
        </authorList>
    </citation>
    <scope>NUCLEOTIDE SEQUENCE [LARGE SCALE GENOMIC DNA]</scope>
    <source>
        <strain>ATCC 51573 / DSM 12127 / PCA</strain>
    </source>
</reference>